<reference key="1">
    <citation type="journal article" date="2006" name="Science">
        <title>Genomic islands and the ecology and evolution of Prochlorococcus.</title>
        <authorList>
            <person name="Coleman M.L."/>
            <person name="Sullivan M.B."/>
            <person name="Martiny A.C."/>
            <person name="Steglich C."/>
            <person name="Barry K."/>
            <person name="Delong E.F."/>
            <person name="Chisholm S.W."/>
        </authorList>
    </citation>
    <scope>NUCLEOTIDE SEQUENCE [LARGE SCALE GENOMIC DNA]</scope>
    <source>
        <strain>MIT 9312</strain>
    </source>
</reference>
<dbReference type="EMBL" id="CP000111">
    <property type="protein sequence ID" value="ABB49360.1"/>
    <property type="molecule type" value="Genomic_DNA"/>
</dbReference>
<dbReference type="SMR" id="Q31CN5"/>
<dbReference type="STRING" id="74546.PMT9312_0299"/>
<dbReference type="KEGG" id="pmi:PMT9312_0299"/>
<dbReference type="eggNOG" id="ENOG5032RR6">
    <property type="taxonomic scope" value="Bacteria"/>
</dbReference>
<dbReference type="HOGENOM" id="CLU_194095_0_0_3"/>
<dbReference type="Proteomes" id="UP000002715">
    <property type="component" value="Chromosome"/>
</dbReference>
<dbReference type="GO" id="GO:0009523">
    <property type="term" value="C:photosystem II"/>
    <property type="evidence" value="ECO:0007669"/>
    <property type="project" value="UniProtKB-KW"/>
</dbReference>
<dbReference type="GO" id="GO:0031676">
    <property type="term" value="C:plasma membrane-derived thylakoid membrane"/>
    <property type="evidence" value="ECO:0007669"/>
    <property type="project" value="UniProtKB-SubCell"/>
</dbReference>
<dbReference type="GO" id="GO:0009055">
    <property type="term" value="F:electron transfer activity"/>
    <property type="evidence" value="ECO:0007669"/>
    <property type="project" value="UniProtKB-UniRule"/>
</dbReference>
<dbReference type="GO" id="GO:0020037">
    <property type="term" value="F:heme binding"/>
    <property type="evidence" value="ECO:0007669"/>
    <property type="project" value="InterPro"/>
</dbReference>
<dbReference type="GO" id="GO:0005506">
    <property type="term" value="F:iron ion binding"/>
    <property type="evidence" value="ECO:0007669"/>
    <property type="project" value="UniProtKB-UniRule"/>
</dbReference>
<dbReference type="GO" id="GO:0009767">
    <property type="term" value="P:photosynthetic electron transport chain"/>
    <property type="evidence" value="ECO:0007669"/>
    <property type="project" value="InterPro"/>
</dbReference>
<dbReference type="Gene3D" id="1.20.5.860">
    <property type="entry name" value="Photosystem II cytochrome b559, alpha subunit"/>
    <property type="match status" value="1"/>
</dbReference>
<dbReference type="HAMAP" id="MF_00642">
    <property type="entry name" value="PSII_PsbE"/>
    <property type="match status" value="1"/>
</dbReference>
<dbReference type="InterPro" id="IPR006217">
    <property type="entry name" value="PSII_cyt_b559_asu"/>
</dbReference>
<dbReference type="InterPro" id="IPR037025">
    <property type="entry name" value="PSII_cyt_b559_asu_sf"/>
</dbReference>
<dbReference type="InterPro" id="IPR013081">
    <property type="entry name" value="PSII_cyt_b559_N"/>
</dbReference>
<dbReference type="InterPro" id="IPR013082">
    <property type="entry name" value="PSII_cytb559_asu_lum"/>
</dbReference>
<dbReference type="NCBIfam" id="TIGR01332">
    <property type="entry name" value="cyt_b559_alpha"/>
    <property type="match status" value="1"/>
</dbReference>
<dbReference type="PANTHER" id="PTHR33391">
    <property type="entry name" value="CYTOCHROME B559 SUBUNIT BETA-RELATED"/>
    <property type="match status" value="1"/>
</dbReference>
<dbReference type="PANTHER" id="PTHR33391:SF9">
    <property type="entry name" value="CYTOCHROME B559 SUBUNIT BETA-RELATED"/>
    <property type="match status" value="1"/>
</dbReference>
<dbReference type="Pfam" id="PF00283">
    <property type="entry name" value="Cytochrom_B559"/>
    <property type="match status" value="1"/>
</dbReference>
<dbReference type="Pfam" id="PF00284">
    <property type="entry name" value="Cytochrom_B559a"/>
    <property type="match status" value="1"/>
</dbReference>
<dbReference type="PIRSF" id="PIRSF000036">
    <property type="entry name" value="PsbE"/>
    <property type="match status" value="1"/>
</dbReference>
<dbReference type="SUPFAM" id="SSF161045">
    <property type="entry name" value="Cytochrome b559 subunits"/>
    <property type="match status" value="1"/>
</dbReference>
<keyword id="KW-0249">Electron transport</keyword>
<keyword id="KW-0349">Heme</keyword>
<keyword id="KW-0408">Iron</keyword>
<keyword id="KW-0472">Membrane</keyword>
<keyword id="KW-0479">Metal-binding</keyword>
<keyword id="KW-0602">Photosynthesis</keyword>
<keyword id="KW-0604">Photosystem II</keyword>
<keyword id="KW-0793">Thylakoid</keyword>
<keyword id="KW-0812">Transmembrane</keyword>
<keyword id="KW-1133">Transmembrane helix</keyword>
<keyword id="KW-0813">Transport</keyword>
<sequence>MIMAAGSTGERPFFEIITSIRYWIIHAVTLPAIFIAGFLFVYTGLAYDAFGTPRPDSYFQSSESKAPVVTQRYEAKSQLDLRTK</sequence>
<comment type="function">
    <text evidence="1">This b-type cytochrome is tightly associated with the reaction center of photosystem II (PSII). PSII is a light-driven water:plastoquinone oxidoreductase that uses light energy to abstract electrons from H(2)O, generating O(2) and a proton gradient subsequently used for ATP formation. It consists of a core antenna complex that captures photons, and an electron transfer chain that converts photonic excitation into a charge separation.</text>
</comment>
<comment type="cofactor">
    <cofactor evidence="1">
        <name>heme b</name>
        <dbReference type="ChEBI" id="CHEBI:60344"/>
    </cofactor>
    <text evidence="1">With its partner (PsbF) binds heme. PSII binds additional chlorophylls, carotenoids and specific lipids.</text>
</comment>
<comment type="subunit">
    <text evidence="2">Heterodimer of an alpha subunit and a beta subunit. PSII is composed of 1 copy each of membrane proteins PsbA, PsbB, PsbC, PsbD, PsbE, PsbF, PsbH, PsbI, PsbJ, PsbK, PsbL, PsbM, PsbT, PsbX, PsbY, Psb30/Ycf12, peripheral proteins PsbO, CyanoQ (PsbQ), PsbU, PsbV and a large number of cofactors. It forms dimeric complexes.</text>
</comment>
<comment type="subcellular location">
    <subcellularLocation>
        <location evidence="1">Cellular thylakoid membrane</location>
        <topology evidence="1">Single-pass membrane protein</topology>
    </subcellularLocation>
</comment>
<comment type="similarity">
    <text evidence="1">Belongs to the PsbE/PsbF family.</text>
</comment>
<name>PSBE_PROM9</name>
<organism>
    <name type="scientific">Prochlorococcus marinus (strain MIT 9312)</name>
    <dbReference type="NCBI Taxonomy" id="74546"/>
    <lineage>
        <taxon>Bacteria</taxon>
        <taxon>Bacillati</taxon>
        <taxon>Cyanobacteriota</taxon>
        <taxon>Cyanophyceae</taxon>
        <taxon>Synechococcales</taxon>
        <taxon>Prochlorococcaceae</taxon>
        <taxon>Prochlorococcus</taxon>
    </lineage>
</organism>
<gene>
    <name evidence="1" type="primary">psbE</name>
    <name type="ordered locus">PMT9312_0299</name>
</gene>
<protein>
    <recommendedName>
        <fullName evidence="1">Cytochrome b559 subunit alpha</fullName>
    </recommendedName>
    <alternativeName>
        <fullName evidence="1">PSII reaction center subunit V</fullName>
    </alternativeName>
</protein>
<accession>Q31CN5</accession>
<proteinExistence type="inferred from homology"/>
<feature type="chain" id="PRO_0000233216" description="Cytochrome b559 subunit alpha">
    <location>
        <begin position="1"/>
        <end position="84"/>
    </location>
</feature>
<feature type="transmembrane region" description="Helical" evidence="1">
    <location>
        <begin position="24"/>
        <end position="38"/>
    </location>
</feature>
<feature type="binding site" description="axial binding residue" evidence="1">
    <location>
        <position position="26"/>
    </location>
    <ligand>
        <name>heme</name>
        <dbReference type="ChEBI" id="CHEBI:30413"/>
        <note>ligand shared with beta subunit</note>
    </ligand>
    <ligandPart>
        <name>Fe</name>
        <dbReference type="ChEBI" id="CHEBI:18248"/>
    </ligandPart>
</feature>
<evidence type="ECO:0000255" key="1">
    <source>
        <dbReference type="HAMAP-Rule" id="MF_00642"/>
    </source>
</evidence>
<evidence type="ECO:0000305" key="2"/>